<reference key="1">
    <citation type="journal article" date="1994" name="Science">
        <title>Complete nucleotide sequence of Saccharomyces cerevisiae chromosome VIII.</title>
        <authorList>
            <person name="Johnston M."/>
            <person name="Andrews S."/>
            <person name="Brinkman R."/>
            <person name="Cooper J."/>
            <person name="Ding H."/>
            <person name="Dover J."/>
            <person name="Du Z."/>
            <person name="Favello A."/>
            <person name="Fulton L."/>
            <person name="Gattung S."/>
            <person name="Geisel C."/>
            <person name="Kirsten J."/>
            <person name="Kucaba T."/>
            <person name="Hillier L.W."/>
            <person name="Jier M."/>
            <person name="Johnston L."/>
            <person name="Langston Y."/>
            <person name="Latreille P."/>
            <person name="Louis E.J."/>
            <person name="Macri C."/>
            <person name="Mardis E."/>
            <person name="Menezes S."/>
            <person name="Mouser L."/>
            <person name="Nhan M."/>
            <person name="Rifkin L."/>
            <person name="Riles L."/>
            <person name="St Peter H."/>
            <person name="Trevaskis E."/>
            <person name="Vaughan K."/>
            <person name="Vignati D."/>
            <person name="Wilcox L."/>
            <person name="Wohldman P."/>
            <person name="Waterston R."/>
            <person name="Wilson R."/>
            <person name="Vaudin M."/>
        </authorList>
    </citation>
    <scope>NUCLEOTIDE SEQUENCE [LARGE SCALE GENOMIC DNA]</scope>
    <source>
        <strain>ATCC 204508 / S288c</strain>
    </source>
</reference>
<reference key="2">
    <citation type="journal article" date="2014" name="G3 (Bethesda)">
        <title>The reference genome sequence of Saccharomyces cerevisiae: Then and now.</title>
        <authorList>
            <person name="Engel S.R."/>
            <person name="Dietrich F.S."/>
            <person name="Fisk D.G."/>
            <person name="Binkley G."/>
            <person name="Balakrishnan R."/>
            <person name="Costanzo M.C."/>
            <person name="Dwight S.S."/>
            <person name="Hitz B.C."/>
            <person name="Karra K."/>
            <person name="Nash R.S."/>
            <person name="Weng S."/>
            <person name="Wong E.D."/>
            <person name="Lloyd P."/>
            <person name="Skrzypek M.S."/>
            <person name="Miyasato S.R."/>
            <person name="Simison M."/>
            <person name="Cherry J.M."/>
        </authorList>
    </citation>
    <scope>GENOME REANNOTATION</scope>
    <source>
        <strain>ATCC 204508 / S288c</strain>
    </source>
</reference>
<accession>P38799</accession>
<accession>D3DL28</accession>
<name>YHN8_YEAST</name>
<organism>
    <name type="scientific">Saccharomyces cerevisiae (strain ATCC 204508 / S288c)</name>
    <name type="common">Baker's yeast</name>
    <dbReference type="NCBI Taxonomy" id="559292"/>
    <lineage>
        <taxon>Eukaryota</taxon>
        <taxon>Fungi</taxon>
        <taxon>Dikarya</taxon>
        <taxon>Ascomycota</taxon>
        <taxon>Saccharomycotina</taxon>
        <taxon>Saccharomycetes</taxon>
        <taxon>Saccharomycetales</taxon>
        <taxon>Saccharomycetaceae</taxon>
        <taxon>Saccharomyces</taxon>
    </lineage>
</organism>
<feature type="chain" id="PRO_0000202900" description="Uncharacterized protein YHR078W">
    <location>
        <begin position="1"/>
        <end position="552"/>
    </location>
</feature>
<feature type="transmembrane region" description="Helical" evidence="1">
    <location>
        <begin position="127"/>
        <end position="147"/>
    </location>
</feature>
<feature type="transmembrane region" description="Helical" evidence="1">
    <location>
        <begin position="160"/>
        <end position="180"/>
    </location>
</feature>
<feature type="transmembrane region" description="Helical" evidence="1">
    <location>
        <begin position="393"/>
        <end position="413"/>
    </location>
</feature>
<feature type="transmembrane region" description="Helical" evidence="1">
    <location>
        <begin position="517"/>
        <end position="537"/>
    </location>
</feature>
<evidence type="ECO:0000255" key="1"/>
<evidence type="ECO:0000305" key="2"/>
<dbReference type="EMBL" id="U10556">
    <property type="protein sequence ID" value="AAB68887.1"/>
    <property type="molecule type" value="Genomic_DNA"/>
</dbReference>
<dbReference type="EMBL" id="BK006934">
    <property type="protein sequence ID" value="DAA06772.1"/>
    <property type="molecule type" value="Genomic_DNA"/>
</dbReference>
<dbReference type="PIR" id="S46809">
    <property type="entry name" value="S46809"/>
</dbReference>
<dbReference type="RefSeq" id="NP_011945.1">
    <property type="nucleotide sequence ID" value="NM_001179208.1"/>
</dbReference>
<dbReference type="SMR" id="P38799"/>
<dbReference type="BioGRID" id="36512">
    <property type="interactions" value="94"/>
</dbReference>
<dbReference type="DIP" id="DIP-7298N"/>
<dbReference type="FunCoup" id="P38799">
    <property type="interactions" value="257"/>
</dbReference>
<dbReference type="IntAct" id="P38799">
    <property type="interactions" value="1"/>
</dbReference>
<dbReference type="STRING" id="4932.YHR078W"/>
<dbReference type="iPTMnet" id="P38799"/>
<dbReference type="PaxDb" id="4932-YHR078W"/>
<dbReference type="PeptideAtlas" id="P38799"/>
<dbReference type="EnsemblFungi" id="YHR078W_mRNA">
    <property type="protein sequence ID" value="YHR078W"/>
    <property type="gene ID" value="YHR078W"/>
</dbReference>
<dbReference type="GeneID" id="856477"/>
<dbReference type="KEGG" id="sce:YHR078W"/>
<dbReference type="AGR" id="SGD:S000001120"/>
<dbReference type="SGD" id="S000001120">
    <property type="gene designation" value="YHR078W"/>
</dbReference>
<dbReference type="VEuPathDB" id="FungiDB:YHR078W"/>
<dbReference type="eggNOG" id="KOG2417">
    <property type="taxonomic scope" value="Eukaryota"/>
</dbReference>
<dbReference type="HOGENOM" id="CLU_498921_0_0_1"/>
<dbReference type="InParanoid" id="P38799"/>
<dbReference type="OMA" id="FRFNYQH"/>
<dbReference type="OrthoDB" id="264392at2759"/>
<dbReference type="BioCyc" id="YEAST:G3O-31125-MONOMER"/>
<dbReference type="BioGRID-ORCS" id="856477">
    <property type="hits" value="4 hits in 10 CRISPR screens"/>
</dbReference>
<dbReference type="PRO" id="PR:P38799"/>
<dbReference type="Proteomes" id="UP000002311">
    <property type="component" value="Chromosome VIII"/>
</dbReference>
<dbReference type="RNAct" id="P38799">
    <property type="molecule type" value="protein"/>
</dbReference>
<dbReference type="GO" id="GO:0016020">
    <property type="term" value="C:membrane"/>
    <property type="evidence" value="ECO:0007669"/>
    <property type="project" value="UniProtKB-SubCell"/>
</dbReference>
<dbReference type="InterPro" id="IPR025969">
    <property type="entry name" value="ABA_GPCR_dom"/>
</dbReference>
<dbReference type="InterPro" id="IPR022535">
    <property type="entry name" value="Golgi_pH-regulator_cons_dom"/>
</dbReference>
<dbReference type="InterPro" id="IPR015672">
    <property type="entry name" value="GPHR/GTG"/>
</dbReference>
<dbReference type="PANTHER" id="PTHR15948">
    <property type="entry name" value="G-PROTEIN COUPLED RECEPTOR 89-RELATED"/>
    <property type="match status" value="1"/>
</dbReference>
<dbReference type="PANTHER" id="PTHR15948:SF0">
    <property type="entry name" value="GOLGI PH REGULATOR A-RELATED"/>
    <property type="match status" value="1"/>
</dbReference>
<dbReference type="Pfam" id="PF12430">
    <property type="entry name" value="ABA_GPCR"/>
    <property type="match status" value="1"/>
</dbReference>
<dbReference type="Pfam" id="PF12537">
    <property type="entry name" value="GPHR_N"/>
    <property type="match status" value="1"/>
</dbReference>
<protein>
    <recommendedName>
        <fullName>Uncharacterized protein YHR078W</fullName>
    </recommendedName>
</protein>
<proteinExistence type="predicted"/>
<comment type="subcellular location">
    <subcellularLocation>
        <location evidence="2">Membrane</location>
        <topology evidence="2">Multi-pass membrane protein</topology>
    </subcellularLocation>
</comment>
<gene>
    <name type="ordered locus">YHR078W</name>
</gene>
<sequence length="552" mass="63331">MEALIVFIVLSVSGAFAYKCSYERLWFKVGSLFDIISTSSKKNVIPLASKMEVGSNEDVSSMGNFINKFYTEYSLPSHKVLQSLRVLFSLAMMTYTVTIEIILWQIKVAGMDKEVTFITTWVWPLTAIMLSFILILFQPFFIIISLLNKFYNDKFDIDRLIIVTCIILSTLIALLSYINIGPFQYTKNILTRLSIGGVTVMASLSGLATVSSLYYNFLVIWHKFRNTPMSDPSFRNINNSNNNSKSLLWTTDAYIEEKIQDYEHNIEQNVQILRSLEEEVGENSTFKAELMEKIAWYQLELGKLEALLQQSPQVRTFKKAFEVGFIIYCLHKLIITFLKRIPYIIYHSLKYPDDYDYENFSENAASDPLAITIANILDFSFFRFNYQHDLDSLTKQISLFLSISLFLCCLSAVNTTISYVVTLLPIKFQILALFAMQNDDTANVLPEYTNNSSYKGKKRNYSQEQKGISLIKNLVVSELTGVYVLATTLMVRSHLPFEVSQRLKELLGGKFTVPNIVIDSWFDEVYAFACVFTFICIRIAERKLSTKKVSVE</sequence>
<keyword id="KW-0472">Membrane</keyword>
<keyword id="KW-1185">Reference proteome</keyword>
<keyword id="KW-0812">Transmembrane</keyword>
<keyword id="KW-1133">Transmembrane helix</keyword>